<accession>Q1JFM3</accession>
<sequence length="202" mass="23357">MVNYPHNLIRQKVSSVQKQTKQNKVDFANRGMSFEAAINATNDYYLSRQIAVIHKKPTPVQIVKVDYPKRSRAKIVEAYFRQASTTDYCGVYKGHYVDFEAKETRQKTAMPMKNFHLHQIEHMACVLHQKGICFVLLHFSTLKETYYLPAQALISFYQIDNGSKSMPIDYIRKNGFKVAFGAFPQVPYLNIIEQNFLGGDYN</sequence>
<proteinExistence type="inferred from homology"/>
<evidence type="ECO:0000255" key="1">
    <source>
        <dbReference type="HAMAP-Rule" id="MF_00130"/>
    </source>
</evidence>
<protein>
    <recommendedName>
        <fullName evidence="1">Holliday junction resolvase RecU</fullName>
        <ecNumber evidence="1">3.1.21.10</ecNumber>
    </recommendedName>
    <alternativeName>
        <fullName evidence="1">Recombination protein U homolog</fullName>
    </alternativeName>
</protein>
<comment type="function">
    <text evidence="1">Endonuclease that resolves Holliday junction intermediates in genetic recombination. Cleaves mobile four-strand junctions by introducing symmetrical nicks in paired strands. Promotes annealing of linear ssDNA with homologous dsDNA. Required for DNA repair, homologous recombination and chromosome segregation.</text>
</comment>
<comment type="catalytic activity">
    <reaction evidence="1">
        <text>Endonucleolytic cleavage at a junction such as a reciprocal single-stranded crossover between two homologous DNA duplexes (Holliday junction).</text>
        <dbReference type="EC" id="3.1.21.10"/>
    </reaction>
</comment>
<comment type="cofactor">
    <cofactor evidence="1">
        <name>Mg(2+)</name>
        <dbReference type="ChEBI" id="CHEBI:18420"/>
    </cofactor>
    <text evidence="1">Binds 1 Mg(2+) ion per subunit.</text>
</comment>
<comment type="subcellular location">
    <subcellularLocation>
        <location evidence="1">Cytoplasm</location>
    </subcellularLocation>
</comment>
<comment type="similarity">
    <text evidence="1">Belongs to the RecU family.</text>
</comment>
<name>RECU_STRPD</name>
<dbReference type="EC" id="3.1.21.10" evidence="1"/>
<dbReference type="EMBL" id="CP000260">
    <property type="protein sequence ID" value="ABF34536.1"/>
    <property type="molecule type" value="Genomic_DNA"/>
</dbReference>
<dbReference type="RefSeq" id="WP_002983622.1">
    <property type="nucleotide sequence ID" value="NZ_CVUH01000010.1"/>
</dbReference>
<dbReference type="SMR" id="Q1JFM3"/>
<dbReference type="GeneID" id="69900483"/>
<dbReference type="KEGG" id="sph:MGAS10270_Spy1471"/>
<dbReference type="HOGENOM" id="CLU_096340_0_0_9"/>
<dbReference type="Proteomes" id="UP000002436">
    <property type="component" value="Chromosome"/>
</dbReference>
<dbReference type="GO" id="GO:0005737">
    <property type="term" value="C:cytoplasm"/>
    <property type="evidence" value="ECO:0007669"/>
    <property type="project" value="UniProtKB-SubCell"/>
</dbReference>
<dbReference type="GO" id="GO:0004519">
    <property type="term" value="F:endonuclease activity"/>
    <property type="evidence" value="ECO:0007669"/>
    <property type="project" value="UniProtKB-UniRule"/>
</dbReference>
<dbReference type="GO" id="GO:0000287">
    <property type="term" value="F:magnesium ion binding"/>
    <property type="evidence" value="ECO:0007669"/>
    <property type="project" value="UniProtKB-UniRule"/>
</dbReference>
<dbReference type="GO" id="GO:0003676">
    <property type="term" value="F:nucleic acid binding"/>
    <property type="evidence" value="ECO:0007669"/>
    <property type="project" value="InterPro"/>
</dbReference>
<dbReference type="GO" id="GO:0007059">
    <property type="term" value="P:chromosome segregation"/>
    <property type="evidence" value="ECO:0007669"/>
    <property type="project" value="UniProtKB-UniRule"/>
</dbReference>
<dbReference type="GO" id="GO:0006310">
    <property type="term" value="P:DNA recombination"/>
    <property type="evidence" value="ECO:0007669"/>
    <property type="project" value="UniProtKB-UniRule"/>
</dbReference>
<dbReference type="GO" id="GO:0006281">
    <property type="term" value="P:DNA repair"/>
    <property type="evidence" value="ECO:0007669"/>
    <property type="project" value="UniProtKB-UniRule"/>
</dbReference>
<dbReference type="CDD" id="cd22354">
    <property type="entry name" value="RecU-like"/>
    <property type="match status" value="1"/>
</dbReference>
<dbReference type="Gene3D" id="3.40.1350.10">
    <property type="match status" value="1"/>
</dbReference>
<dbReference type="HAMAP" id="MF_00130">
    <property type="entry name" value="RecU"/>
    <property type="match status" value="1"/>
</dbReference>
<dbReference type="InterPro" id="IPR004612">
    <property type="entry name" value="Resolv_RecU"/>
</dbReference>
<dbReference type="InterPro" id="IPR011335">
    <property type="entry name" value="Restrct_endonuc-II-like"/>
</dbReference>
<dbReference type="InterPro" id="IPR011856">
    <property type="entry name" value="tRNA_endonuc-like_dom_sf"/>
</dbReference>
<dbReference type="NCBIfam" id="NF002580">
    <property type="entry name" value="PRK02234.1-1"/>
    <property type="match status" value="1"/>
</dbReference>
<dbReference type="NCBIfam" id="NF002584">
    <property type="entry name" value="PRK02234.1-5"/>
    <property type="match status" value="1"/>
</dbReference>
<dbReference type="NCBIfam" id="TIGR00648">
    <property type="entry name" value="recU"/>
    <property type="match status" value="1"/>
</dbReference>
<dbReference type="Pfam" id="PF03838">
    <property type="entry name" value="RecU"/>
    <property type="match status" value="1"/>
</dbReference>
<dbReference type="PIRSF" id="PIRSF037785">
    <property type="entry name" value="RecU"/>
    <property type="match status" value="1"/>
</dbReference>
<dbReference type="SUPFAM" id="SSF52980">
    <property type="entry name" value="Restriction endonuclease-like"/>
    <property type="match status" value="1"/>
</dbReference>
<reference key="1">
    <citation type="journal article" date="2006" name="Proc. Natl. Acad. Sci. U.S.A.">
        <title>Molecular genetic anatomy of inter- and intraserotype variation in the human bacterial pathogen group A Streptococcus.</title>
        <authorList>
            <person name="Beres S.B."/>
            <person name="Richter E.W."/>
            <person name="Nagiec M.J."/>
            <person name="Sumby P."/>
            <person name="Porcella S.F."/>
            <person name="DeLeo F.R."/>
            <person name="Musser J.M."/>
        </authorList>
    </citation>
    <scope>NUCLEOTIDE SEQUENCE [LARGE SCALE GENOMIC DNA]</scope>
    <source>
        <strain>MGAS10270</strain>
    </source>
</reference>
<feature type="chain" id="PRO_1000016750" description="Holliday junction resolvase RecU">
    <location>
        <begin position="1"/>
        <end position="202"/>
    </location>
</feature>
<feature type="binding site" evidence="1">
    <location>
        <position position="85"/>
    </location>
    <ligand>
        <name>Mg(2+)</name>
        <dbReference type="ChEBI" id="CHEBI:18420"/>
    </ligand>
</feature>
<feature type="binding site" evidence="1">
    <location>
        <position position="87"/>
    </location>
    <ligand>
        <name>Mg(2+)</name>
        <dbReference type="ChEBI" id="CHEBI:18420"/>
    </ligand>
</feature>
<feature type="binding site" evidence="1">
    <location>
        <position position="100"/>
    </location>
    <ligand>
        <name>Mg(2+)</name>
        <dbReference type="ChEBI" id="CHEBI:18420"/>
    </ligand>
</feature>
<feature type="binding site" evidence="1">
    <location>
        <position position="119"/>
    </location>
    <ligand>
        <name>Mg(2+)</name>
        <dbReference type="ChEBI" id="CHEBI:18420"/>
    </ligand>
</feature>
<feature type="site" description="Transition state stabilizer" evidence="1">
    <location>
        <position position="102"/>
    </location>
</feature>
<gene>
    <name evidence="1" type="primary">recU</name>
    <name type="ordered locus">MGAS10270_Spy1471</name>
</gene>
<organism>
    <name type="scientific">Streptococcus pyogenes serotype M2 (strain MGAS10270)</name>
    <dbReference type="NCBI Taxonomy" id="370552"/>
    <lineage>
        <taxon>Bacteria</taxon>
        <taxon>Bacillati</taxon>
        <taxon>Bacillota</taxon>
        <taxon>Bacilli</taxon>
        <taxon>Lactobacillales</taxon>
        <taxon>Streptococcaceae</taxon>
        <taxon>Streptococcus</taxon>
    </lineage>
</organism>
<keyword id="KW-0963">Cytoplasm</keyword>
<keyword id="KW-0227">DNA damage</keyword>
<keyword id="KW-0233">DNA recombination</keyword>
<keyword id="KW-0234">DNA repair</keyword>
<keyword id="KW-0255">Endonuclease</keyword>
<keyword id="KW-0378">Hydrolase</keyword>
<keyword id="KW-0460">Magnesium</keyword>
<keyword id="KW-0479">Metal-binding</keyword>
<keyword id="KW-0540">Nuclease</keyword>